<keyword id="KW-0002">3D-structure</keyword>
<keyword id="KW-1015">Disulfide bond</keyword>
<keyword id="KW-0489">Methyltransferase</keyword>
<keyword id="KW-0949">S-adenosyl-L-methionine</keyword>
<keyword id="KW-0808">Transferase</keyword>
<keyword id="KW-0819">tRNA processing</keyword>
<gene>
    <name type="primary">trmI</name>
    <name type="synonym">pimT-like</name>
    <name type="ordered locus">PYRAB04300</name>
    <name type="ORF">PAB0283</name>
</gene>
<reference key="1">
    <citation type="journal article" date="2003" name="Mol. Microbiol.">
        <title>An integrated analysis of the genome of the hyperthermophilic archaeon Pyrococcus abyssi.</title>
        <authorList>
            <person name="Cohen G.N."/>
            <person name="Barbe V."/>
            <person name="Flament D."/>
            <person name="Galperin M."/>
            <person name="Heilig R."/>
            <person name="Lecompte O."/>
            <person name="Poch O."/>
            <person name="Prieur D."/>
            <person name="Querellou J."/>
            <person name="Ripp R."/>
            <person name="Thierry J.-C."/>
            <person name="Van der Oost J."/>
            <person name="Weissenbach J."/>
            <person name="Zivanovic Y."/>
            <person name="Forterre P."/>
        </authorList>
    </citation>
    <scope>NUCLEOTIDE SEQUENCE [LARGE SCALE GENOMIC DNA]</scope>
    <source>
        <strain>GE5 / Orsay</strain>
    </source>
</reference>
<reference key="2">
    <citation type="journal article" date="2012" name="Curr. Microbiol.">
        <title>Re-annotation of two hyperthermophilic archaea Pyrococcus abyssi GE5 and Pyrococcus furiosus DSM 3638.</title>
        <authorList>
            <person name="Gao J."/>
            <person name="Wang J."/>
        </authorList>
    </citation>
    <scope>GENOME REANNOTATION</scope>
    <source>
        <strain>GE5 / Orsay</strain>
    </source>
</reference>
<reference key="3">
    <citation type="journal article" date="2004" name="Nucleic Acids Res.">
        <title>A primordial RNA modification enzyme: the case of tRNA (m1A) methyltransferase.</title>
        <authorList>
            <person name="Roovers M."/>
            <person name="Wouters J."/>
            <person name="Bujnicki J.M."/>
            <person name="Tricot C."/>
            <person name="Stalon V."/>
            <person name="Grosjean H."/>
            <person name="Droogmans L."/>
        </authorList>
    </citation>
    <scope>FUNCTION</scope>
    <scope>CATALYTIC ACTIVITY</scope>
    <scope>SUBUNIT</scope>
    <scope>DISULFIDE BONDS</scope>
    <scope>MUTAGENESIS OF CYS-196 AND CYS-233</scope>
    <source>
        <strain>GE5 / Orsay</strain>
    </source>
</reference>
<reference key="4">
    <citation type="journal article" date="2010" name="Nucleic Acids Res.">
        <title>Insights into the hyperthermostability and unusual region-specificity of archaeal Pyrococcus abyssi tRNA m1A57/58 methyltransferase.</title>
        <authorList>
            <person name="Guelorget A."/>
            <person name="Roovers M."/>
            <person name="Guerineau V."/>
            <person name="Barbey C."/>
            <person name="Li X."/>
            <person name="Golinelli-Pimpaneau B."/>
        </authorList>
    </citation>
    <scope>X-RAY CRYSTALLOGRAPHY (1.60 ANGSTROMS) IN COMPLEX WITH S-ADENOSYL-L-HOMOCYSTEINE AND S-ADENOSYL-L-METHIONINE</scope>
    <scope>FUNCTION</scope>
    <scope>CATALYTIC ACTIVITY</scope>
    <scope>SUBUNIT</scope>
    <scope>DISULFIDE BONDS</scope>
    <scope>DOMAIN</scope>
    <scope>MUTAGENESIS OF HIS-78</scope>
</reference>
<protein>
    <recommendedName>
        <fullName>tRNA (adenine(57)-N(1)/adenine(58)-N(1))-methyltransferase TrmI</fullName>
        <ecNumber>2.1.1.219</ecNumber>
    </recommendedName>
    <alternativeName>
        <fullName>tRNA(m1A57/58)-methyltransferase</fullName>
    </alternativeName>
</protein>
<feature type="chain" id="PRO_0000407310" description="tRNA (adenine(57)-N(1)/adenine(58)-N(1))-methyltransferase TrmI">
    <location>
        <begin position="1"/>
        <end position="253"/>
    </location>
</feature>
<feature type="binding site">
    <location>
        <begin position="104"/>
        <end position="107"/>
    </location>
    <ligand>
        <name>S-adenosyl-L-methionine</name>
        <dbReference type="ChEBI" id="CHEBI:59789"/>
    </ligand>
</feature>
<feature type="binding site" evidence="1 3">
    <location>
        <position position="125"/>
    </location>
    <ligand>
        <name>S-adenosyl-L-methionine</name>
        <dbReference type="ChEBI" id="CHEBI:59789"/>
    </ligand>
</feature>
<feature type="binding site" evidence="1 3">
    <location>
        <position position="153"/>
    </location>
    <ligand>
        <name>S-adenosyl-L-methionine</name>
        <dbReference type="ChEBI" id="CHEBI:59789"/>
    </ligand>
</feature>
<feature type="binding site" evidence="1 3">
    <location>
        <position position="169"/>
    </location>
    <ligand>
        <name>S-adenosyl-L-methionine</name>
        <dbReference type="ChEBI" id="CHEBI:59789"/>
    </ligand>
</feature>
<feature type="disulfide bond" description="Interchain (with C-233)">
    <location>
        <position position="196"/>
    </location>
</feature>
<feature type="disulfide bond" description="Interchain (with C-196)">
    <location>
        <position position="233"/>
    </location>
</feature>
<feature type="mutagenesis site" description="Decreases efficiency of the dimethylation reaction." evidence="3">
    <original>H</original>
    <variation>Y</variation>
    <location>
        <position position="78"/>
    </location>
</feature>
<feature type="mutagenesis site" description="Decreases stability of TrmI at extreme temperatures; when associated with S-233." evidence="2">
    <original>C</original>
    <variation>S</variation>
    <location>
        <position position="196"/>
    </location>
</feature>
<feature type="mutagenesis site" description="Decreases stability of TrmI at extreme temperatures; when associated with S-196." evidence="2">
    <original>C</original>
    <variation>S</variation>
    <location>
        <position position="233"/>
    </location>
</feature>
<feature type="strand" evidence="5">
    <location>
        <begin position="7"/>
        <end position="11"/>
    </location>
</feature>
<feature type="strand" evidence="5">
    <location>
        <begin position="17"/>
        <end position="21"/>
    </location>
</feature>
<feature type="strand" evidence="5">
    <location>
        <begin position="24"/>
        <end position="29"/>
    </location>
</feature>
<feature type="strand" evidence="5">
    <location>
        <begin position="32"/>
        <end position="35"/>
    </location>
</feature>
<feature type="helix" evidence="5">
    <location>
        <begin position="36"/>
        <end position="39"/>
    </location>
</feature>
<feature type="strand" evidence="5">
    <location>
        <begin position="47"/>
        <end position="49"/>
    </location>
</feature>
<feature type="strand" evidence="5">
    <location>
        <begin position="55"/>
        <end position="59"/>
    </location>
</feature>
<feature type="helix" evidence="5">
    <location>
        <begin position="63"/>
        <end position="69"/>
    </location>
</feature>
<feature type="helix" evidence="5">
    <location>
        <begin position="79"/>
        <end position="88"/>
    </location>
</feature>
<feature type="strand" evidence="5">
    <location>
        <begin position="96"/>
        <end position="100"/>
    </location>
</feature>
<feature type="helix" evidence="5">
    <location>
        <begin position="106"/>
        <end position="115"/>
    </location>
</feature>
<feature type="strand" evidence="5">
    <location>
        <begin position="119"/>
        <end position="124"/>
    </location>
</feature>
<feature type="helix" evidence="5">
    <location>
        <begin position="128"/>
        <end position="141"/>
    </location>
</feature>
<feature type="turn" evidence="5">
    <location>
        <begin position="144"/>
        <end position="146"/>
    </location>
</feature>
<feature type="strand" evidence="5">
    <location>
        <begin position="147"/>
        <end position="150"/>
    </location>
</feature>
<feature type="helix" evidence="5">
    <location>
        <begin position="154"/>
        <end position="156"/>
    </location>
</feature>
<feature type="strand" evidence="5">
    <location>
        <begin position="162"/>
        <end position="168"/>
    </location>
</feature>
<feature type="helix" evidence="5">
    <location>
        <begin position="173"/>
        <end position="176"/>
    </location>
</feature>
<feature type="helix" evidence="5">
    <location>
        <begin position="177"/>
        <end position="183"/>
    </location>
</feature>
<feature type="strand" evidence="5">
    <location>
        <begin position="184"/>
        <end position="196"/>
    </location>
</feature>
<feature type="helix" evidence="5">
    <location>
        <begin position="197"/>
        <end position="209"/>
    </location>
</feature>
<feature type="helix" evidence="5">
    <location>
        <begin position="211"/>
        <end position="213"/>
    </location>
</feature>
<feature type="strand" evidence="5">
    <location>
        <begin position="218"/>
        <end position="220"/>
    </location>
</feature>
<feature type="strand" evidence="5">
    <location>
        <begin position="227"/>
        <end position="230"/>
    </location>
</feature>
<feature type="strand" evidence="5">
    <location>
        <begin position="233"/>
        <end position="236"/>
    </location>
</feature>
<feature type="strand" evidence="4">
    <location>
        <begin position="238"/>
        <end position="241"/>
    </location>
</feature>
<feature type="strand" evidence="5">
    <location>
        <begin position="246"/>
        <end position="252"/>
    </location>
</feature>
<name>TRMI_PYRAB</name>
<dbReference type="EC" id="2.1.1.219"/>
<dbReference type="EMBL" id="AJ248284">
    <property type="protein sequence ID" value="CAB49352.1"/>
    <property type="molecule type" value="Genomic_DNA"/>
</dbReference>
<dbReference type="EMBL" id="HE613800">
    <property type="protein sequence ID" value="CCE69811.1"/>
    <property type="molecule type" value="Genomic_DNA"/>
</dbReference>
<dbReference type="PIR" id="A75159">
    <property type="entry name" value="A75159"/>
</dbReference>
<dbReference type="RefSeq" id="WP_010867553.1">
    <property type="nucleotide sequence ID" value="NC_000868.1"/>
</dbReference>
<dbReference type="PDB" id="3LGA">
    <property type="method" value="X-ray"/>
    <property type="resolution" value="2.05 A"/>
    <property type="chains" value="A/B/C/D=1-253"/>
</dbReference>
<dbReference type="PDB" id="3LHD">
    <property type="method" value="X-ray"/>
    <property type="resolution" value="2.59 A"/>
    <property type="chains" value="A/B/C/D=1-253"/>
</dbReference>
<dbReference type="PDB" id="3MB5">
    <property type="method" value="X-ray"/>
    <property type="resolution" value="1.60 A"/>
    <property type="chains" value="A=1-253"/>
</dbReference>
<dbReference type="PDBsum" id="3LGA"/>
<dbReference type="PDBsum" id="3LHD"/>
<dbReference type="PDBsum" id="3MB5"/>
<dbReference type="SMR" id="Q9V1J7"/>
<dbReference type="STRING" id="272844.PAB0283"/>
<dbReference type="KEGG" id="pab:PAB0283"/>
<dbReference type="PATRIC" id="fig|272844.11.peg.452"/>
<dbReference type="eggNOG" id="arCOG00978">
    <property type="taxonomic scope" value="Archaea"/>
</dbReference>
<dbReference type="HOGENOM" id="CLU_025402_0_1_2"/>
<dbReference type="OrthoDB" id="30774at2157"/>
<dbReference type="PhylomeDB" id="Q9V1J7"/>
<dbReference type="BioCyc" id="MetaCyc:MONOMER-16690"/>
<dbReference type="BRENDA" id="2.1.1.219">
    <property type="organism ID" value="5242"/>
</dbReference>
<dbReference type="EvolutionaryTrace" id="Q9V1J7"/>
<dbReference type="Proteomes" id="UP000000810">
    <property type="component" value="Chromosome"/>
</dbReference>
<dbReference type="Proteomes" id="UP000009139">
    <property type="component" value="Chromosome"/>
</dbReference>
<dbReference type="GO" id="GO:0031515">
    <property type="term" value="C:tRNA (m1A) methyltransferase complex"/>
    <property type="evidence" value="ECO:0007669"/>
    <property type="project" value="InterPro"/>
</dbReference>
<dbReference type="GO" id="GO:0043827">
    <property type="term" value="F:tRNA (adenine(57)-N1)/(adenine(58)-N1)-methyltransferase activity"/>
    <property type="evidence" value="ECO:0000314"/>
    <property type="project" value="GO_Central"/>
</dbReference>
<dbReference type="GO" id="GO:0160107">
    <property type="term" value="F:tRNA (adenine(58)-N1)-methyltransferase activity"/>
    <property type="evidence" value="ECO:0007669"/>
    <property type="project" value="InterPro"/>
</dbReference>
<dbReference type="GO" id="GO:0030488">
    <property type="term" value="P:tRNA methylation"/>
    <property type="evidence" value="ECO:0007669"/>
    <property type="project" value="InterPro"/>
</dbReference>
<dbReference type="CDD" id="cd02440">
    <property type="entry name" value="AdoMet_MTases"/>
    <property type="match status" value="1"/>
</dbReference>
<dbReference type="FunFam" id="3.10.330.20:FF:000003">
    <property type="entry name" value="tRNA (Adenine(58)-N(1))-methyltransferase, mitochondrial isoform X1"/>
    <property type="match status" value="1"/>
</dbReference>
<dbReference type="Gene3D" id="3.10.330.20">
    <property type="match status" value="1"/>
</dbReference>
<dbReference type="Gene3D" id="3.40.50.150">
    <property type="entry name" value="Vaccinia Virus protein VP39"/>
    <property type="match status" value="1"/>
</dbReference>
<dbReference type="InterPro" id="IPR029063">
    <property type="entry name" value="SAM-dependent_MTases_sf"/>
</dbReference>
<dbReference type="InterPro" id="IPR049470">
    <property type="entry name" value="TRM61_C"/>
</dbReference>
<dbReference type="InterPro" id="IPR014816">
    <property type="entry name" value="tRNA_MeTrfase_Gcd14"/>
</dbReference>
<dbReference type="PANTHER" id="PTHR12133">
    <property type="entry name" value="TRNA (ADENINE(58)-N(1))-METHYLTRANSFERASE"/>
    <property type="match status" value="1"/>
</dbReference>
<dbReference type="PANTHER" id="PTHR12133:SF1">
    <property type="entry name" value="TRNA (ADENINE(58)-N(1))-METHYLTRANSFERASE, MITOCHONDRIAL"/>
    <property type="match status" value="1"/>
</dbReference>
<dbReference type="Pfam" id="PF08704">
    <property type="entry name" value="GCD14"/>
    <property type="match status" value="1"/>
</dbReference>
<dbReference type="Pfam" id="PF14801">
    <property type="entry name" value="TrmI-like_N"/>
    <property type="match status" value="1"/>
</dbReference>
<dbReference type="PIRSF" id="PIRSF017269">
    <property type="entry name" value="GCD14"/>
    <property type="match status" value="1"/>
</dbReference>
<dbReference type="SUPFAM" id="SSF53335">
    <property type="entry name" value="S-adenosyl-L-methionine-dependent methyltransferases"/>
    <property type="match status" value="1"/>
</dbReference>
<dbReference type="PROSITE" id="PS51620">
    <property type="entry name" value="SAM_TRM61"/>
    <property type="match status" value="1"/>
</dbReference>
<accession>Q9V1J7</accession>
<accession>G8ZGD2</accession>
<proteinExistence type="evidence at protein level"/>
<comment type="function">
    <text evidence="2 3">Catalyzes the S-adenosyl-L-methionine-dependent formation of N(1)-methyladenosine at position(s) 57 (m1A57) and 58 (m1A58) in the T-loop of some tRNAs. Methylates the first adenine of an AA sequence.</text>
</comment>
<comment type="catalytic activity">
    <reaction evidence="1 2 3">
        <text>adenosine(57)/adenosine(58) in tRNA + 2 S-adenosyl-L-methionine = N(1)-methyladenosine(57)/N(1)-methyladenosine(58) in tRNA + 2 S-adenosyl-L-homocysteine + 2 H(+)</text>
        <dbReference type="Rhea" id="RHEA:41740"/>
        <dbReference type="Rhea" id="RHEA-COMP:9580"/>
        <dbReference type="Rhea" id="RHEA-COMP:9582"/>
        <dbReference type="ChEBI" id="CHEBI:15378"/>
        <dbReference type="ChEBI" id="CHEBI:57856"/>
        <dbReference type="ChEBI" id="CHEBI:59789"/>
        <dbReference type="ChEBI" id="CHEBI:74411"/>
        <dbReference type="ChEBI" id="CHEBI:74491"/>
        <dbReference type="EC" id="2.1.1.219"/>
    </reaction>
</comment>
<comment type="subunit">
    <text evidence="2 3">Homotetramer composed of a dimer of dimers; disulfide-linked. Disulfide bonds are important for the stability of TrmI at extreme temperatures.</text>
</comment>
<comment type="domain">
    <text evidence="3">Contains a large catalytic C-terminal domain that binds S-adenosyl-L-methionine and a smaller N-terminal domain that may play a role in tRNA recognition. Domains are connected by a linker region.</text>
</comment>
<comment type="similarity">
    <text evidence="1">Belongs to the class I-like SAM-binding methyltransferase superfamily. TRM61 family.</text>
</comment>
<organism>
    <name type="scientific">Pyrococcus abyssi (strain GE5 / Orsay)</name>
    <dbReference type="NCBI Taxonomy" id="272844"/>
    <lineage>
        <taxon>Archaea</taxon>
        <taxon>Methanobacteriati</taxon>
        <taxon>Methanobacteriota</taxon>
        <taxon>Thermococci</taxon>
        <taxon>Thermococcales</taxon>
        <taxon>Thermococcaceae</taxon>
        <taxon>Pyrococcus</taxon>
    </lineage>
</organism>
<sequence>MIREGDKVVLVDPRGKRYLITVSKRDFHTDLGILKLEEIIGRNFGEAIKSHKGHEFKILRPRIVDYLDKMKRGPQIVHPKDAALIVAYAGISPGDFIVEAGVGSGALTLFLANIVGPEGRVVSYEIREDFAKLAWENIKWAGFDDRVTIKLKDIYEGIEEENVDHVILDLPQPERVVEHAAKALKPGGFFVAYTPCSNQVMRLHEKLREFKDYFMKPRTINVLVFDQEVKKECMRPRTTALVHTGYITFARRI</sequence>
<evidence type="ECO:0000255" key="1">
    <source>
        <dbReference type="PROSITE-ProRule" id="PRU00952"/>
    </source>
</evidence>
<evidence type="ECO:0000269" key="2">
    <source>
    </source>
</evidence>
<evidence type="ECO:0000269" key="3">
    <source>
    </source>
</evidence>
<evidence type="ECO:0007829" key="4">
    <source>
        <dbReference type="PDB" id="3LGA"/>
    </source>
</evidence>
<evidence type="ECO:0007829" key="5">
    <source>
        <dbReference type="PDB" id="3MB5"/>
    </source>
</evidence>